<feature type="chain" id="PRO_1000040396" description="6,7-dimethyl-8-ribityllumazine synthase">
    <location>
        <begin position="1"/>
        <end position="155"/>
    </location>
</feature>
<feature type="active site" description="Proton donor" evidence="1">
    <location>
        <position position="90"/>
    </location>
</feature>
<feature type="binding site" evidence="1">
    <location>
        <position position="24"/>
    </location>
    <ligand>
        <name>5-amino-6-(D-ribitylamino)uracil</name>
        <dbReference type="ChEBI" id="CHEBI:15934"/>
    </ligand>
</feature>
<feature type="binding site" evidence="1">
    <location>
        <begin position="58"/>
        <end position="60"/>
    </location>
    <ligand>
        <name>5-amino-6-(D-ribitylamino)uracil</name>
        <dbReference type="ChEBI" id="CHEBI:15934"/>
    </ligand>
</feature>
<feature type="binding site" evidence="1">
    <location>
        <begin position="82"/>
        <end position="84"/>
    </location>
    <ligand>
        <name>5-amino-6-(D-ribitylamino)uracil</name>
        <dbReference type="ChEBI" id="CHEBI:15934"/>
    </ligand>
</feature>
<feature type="binding site" evidence="1">
    <location>
        <begin position="87"/>
        <end position="88"/>
    </location>
    <ligand>
        <name>(2S)-2-hydroxy-3-oxobutyl phosphate</name>
        <dbReference type="ChEBI" id="CHEBI:58830"/>
    </ligand>
</feature>
<feature type="binding site" evidence="1">
    <location>
        <position position="115"/>
    </location>
    <ligand>
        <name>5-amino-6-(D-ribitylamino)uracil</name>
        <dbReference type="ChEBI" id="CHEBI:15934"/>
    </ligand>
</feature>
<feature type="binding site" evidence="1">
    <location>
        <position position="129"/>
    </location>
    <ligand>
        <name>(2S)-2-hydroxy-3-oxobutyl phosphate</name>
        <dbReference type="ChEBI" id="CHEBI:58830"/>
    </ligand>
</feature>
<reference key="1">
    <citation type="submission" date="2005-08" db="EMBL/GenBank/DDBJ databases">
        <title>Complete sequence of Chlorobium chlorochromatii CaD3.</title>
        <authorList>
            <consortium name="US DOE Joint Genome Institute"/>
            <person name="Copeland A."/>
            <person name="Lucas S."/>
            <person name="Lapidus A."/>
            <person name="Barry K."/>
            <person name="Detter J.C."/>
            <person name="Glavina T."/>
            <person name="Hammon N."/>
            <person name="Israni S."/>
            <person name="Pitluck S."/>
            <person name="Bryant D."/>
            <person name="Schmutz J."/>
            <person name="Larimer F."/>
            <person name="Land M."/>
            <person name="Kyrpides N."/>
            <person name="Ivanova N."/>
            <person name="Richardson P."/>
        </authorList>
    </citation>
    <scope>NUCLEOTIDE SEQUENCE [LARGE SCALE GENOMIC DNA]</scope>
    <source>
        <strain>CaD3</strain>
    </source>
</reference>
<accession>Q3AUB5</accession>
<name>RISB_CHLCH</name>
<dbReference type="EC" id="2.5.1.78" evidence="1"/>
<dbReference type="EMBL" id="CP000108">
    <property type="protein sequence ID" value="ABB27410.1"/>
    <property type="molecule type" value="Genomic_DNA"/>
</dbReference>
<dbReference type="SMR" id="Q3AUB5"/>
<dbReference type="STRING" id="340177.Cag_0132"/>
<dbReference type="KEGG" id="cch:Cag_0132"/>
<dbReference type="eggNOG" id="COG0054">
    <property type="taxonomic scope" value="Bacteria"/>
</dbReference>
<dbReference type="HOGENOM" id="CLU_089358_1_1_10"/>
<dbReference type="OrthoDB" id="9809709at2"/>
<dbReference type="UniPathway" id="UPA00275">
    <property type="reaction ID" value="UER00404"/>
</dbReference>
<dbReference type="GO" id="GO:0005829">
    <property type="term" value="C:cytosol"/>
    <property type="evidence" value="ECO:0007669"/>
    <property type="project" value="TreeGrafter"/>
</dbReference>
<dbReference type="GO" id="GO:0009349">
    <property type="term" value="C:riboflavin synthase complex"/>
    <property type="evidence" value="ECO:0007669"/>
    <property type="project" value="InterPro"/>
</dbReference>
<dbReference type="GO" id="GO:0000906">
    <property type="term" value="F:6,7-dimethyl-8-ribityllumazine synthase activity"/>
    <property type="evidence" value="ECO:0007669"/>
    <property type="project" value="UniProtKB-UniRule"/>
</dbReference>
<dbReference type="GO" id="GO:0009231">
    <property type="term" value="P:riboflavin biosynthetic process"/>
    <property type="evidence" value="ECO:0007669"/>
    <property type="project" value="UniProtKB-UniRule"/>
</dbReference>
<dbReference type="CDD" id="cd09209">
    <property type="entry name" value="Lumazine_synthase-I"/>
    <property type="match status" value="1"/>
</dbReference>
<dbReference type="FunFam" id="3.40.50.960:FF:000001">
    <property type="entry name" value="6,7-dimethyl-8-ribityllumazine synthase"/>
    <property type="match status" value="1"/>
</dbReference>
<dbReference type="Gene3D" id="3.40.50.960">
    <property type="entry name" value="Lumazine/riboflavin synthase"/>
    <property type="match status" value="1"/>
</dbReference>
<dbReference type="HAMAP" id="MF_00178">
    <property type="entry name" value="Lumazine_synth"/>
    <property type="match status" value="1"/>
</dbReference>
<dbReference type="InterPro" id="IPR034964">
    <property type="entry name" value="LS"/>
</dbReference>
<dbReference type="InterPro" id="IPR002180">
    <property type="entry name" value="LS/RS"/>
</dbReference>
<dbReference type="InterPro" id="IPR036467">
    <property type="entry name" value="LS/RS_sf"/>
</dbReference>
<dbReference type="NCBIfam" id="TIGR00114">
    <property type="entry name" value="lumazine-synth"/>
    <property type="match status" value="1"/>
</dbReference>
<dbReference type="NCBIfam" id="NF000812">
    <property type="entry name" value="PRK00061.1-4"/>
    <property type="match status" value="1"/>
</dbReference>
<dbReference type="PANTHER" id="PTHR21058:SF0">
    <property type="entry name" value="6,7-DIMETHYL-8-RIBITYLLUMAZINE SYNTHASE"/>
    <property type="match status" value="1"/>
</dbReference>
<dbReference type="PANTHER" id="PTHR21058">
    <property type="entry name" value="6,7-DIMETHYL-8-RIBITYLLUMAZINE SYNTHASE DMRL SYNTHASE LUMAZINE SYNTHASE"/>
    <property type="match status" value="1"/>
</dbReference>
<dbReference type="Pfam" id="PF00885">
    <property type="entry name" value="DMRL_synthase"/>
    <property type="match status" value="1"/>
</dbReference>
<dbReference type="SUPFAM" id="SSF52121">
    <property type="entry name" value="Lumazine synthase"/>
    <property type="match status" value="1"/>
</dbReference>
<organism>
    <name type="scientific">Chlorobium chlorochromatii (strain CaD3)</name>
    <dbReference type="NCBI Taxonomy" id="340177"/>
    <lineage>
        <taxon>Bacteria</taxon>
        <taxon>Pseudomonadati</taxon>
        <taxon>Chlorobiota</taxon>
        <taxon>Chlorobiia</taxon>
        <taxon>Chlorobiales</taxon>
        <taxon>Chlorobiaceae</taxon>
        <taxon>Chlorobium/Pelodictyon group</taxon>
        <taxon>Chlorobium</taxon>
    </lineage>
</organism>
<sequence>MHIEQIEGTLSAAGMRIALVVSRFNDFIGQKLVEGAVDCIRRHGGSEEQMAIYRCPGAFELPMVSKKAALSGKYDAVIALGVIIRGSTPHFDVIAAEATKGIAQASLETMIPIAFGVLTTENLEQAIERAGTKAGNKGFDAAMTAIEMVNLYRQM</sequence>
<comment type="function">
    <text evidence="1">Catalyzes the formation of 6,7-dimethyl-8-ribityllumazine by condensation of 5-amino-6-(D-ribitylamino)uracil with 3,4-dihydroxy-2-butanone 4-phosphate. This is the penultimate step in the biosynthesis of riboflavin.</text>
</comment>
<comment type="catalytic activity">
    <reaction evidence="1">
        <text>(2S)-2-hydroxy-3-oxobutyl phosphate + 5-amino-6-(D-ribitylamino)uracil = 6,7-dimethyl-8-(1-D-ribityl)lumazine + phosphate + 2 H2O + H(+)</text>
        <dbReference type="Rhea" id="RHEA:26152"/>
        <dbReference type="ChEBI" id="CHEBI:15377"/>
        <dbReference type="ChEBI" id="CHEBI:15378"/>
        <dbReference type="ChEBI" id="CHEBI:15934"/>
        <dbReference type="ChEBI" id="CHEBI:43474"/>
        <dbReference type="ChEBI" id="CHEBI:58201"/>
        <dbReference type="ChEBI" id="CHEBI:58830"/>
        <dbReference type="EC" id="2.5.1.78"/>
    </reaction>
</comment>
<comment type="pathway">
    <text evidence="1">Cofactor biosynthesis; riboflavin biosynthesis; riboflavin from 2-hydroxy-3-oxobutyl phosphate and 5-amino-6-(D-ribitylamino)uracil: step 1/2.</text>
</comment>
<comment type="similarity">
    <text evidence="1">Belongs to the DMRL synthase family.</text>
</comment>
<gene>
    <name evidence="1" type="primary">ribH</name>
    <name type="ordered locus">Cag_0132</name>
</gene>
<protein>
    <recommendedName>
        <fullName evidence="1">6,7-dimethyl-8-ribityllumazine synthase</fullName>
        <shortName evidence="1">DMRL synthase</shortName>
        <shortName evidence="1">LS</shortName>
        <shortName evidence="1">Lumazine synthase</shortName>
        <ecNumber evidence="1">2.5.1.78</ecNumber>
    </recommendedName>
</protein>
<evidence type="ECO:0000255" key="1">
    <source>
        <dbReference type="HAMAP-Rule" id="MF_00178"/>
    </source>
</evidence>
<proteinExistence type="inferred from homology"/>
<keyword id="KW-0686">Riboflavin biosynthesis</keyword>
<keyword id="KW-0808">Transferase</keyword>